<name>NANK_ECOHS</name>
<gene>
    <name evidence="1" type="primary">nanK</name>
    <name type="ordered locus">EcHS_A3410</name>
</gene>
<feature type="chain" id="PRO_1000066909" description="N-acetylmannosamine kinase">
    <location>
        <begin position="1"/>
        <end position="291"/>
    </location>
</feature>
<feature type="binding site" evidence="1">
    <location>
        <begin position="5"/>
        <end position="12"/>
    </location>
    <ligand>
        <name>ATP</name>
        <dbReference type="ChEBI" id="CHEBI:30616"/>
    </ligand>
</feature>
<feature type="binding site" evidence="1">
    <location>
        <begin position="132"/>
        <end position="139"/>
    </location>
    <ligand>
        <name>ATP</name>
        <dbReference type="ChEBI" id="CHEBI:30616"/>
    </ligand>
</feature>
<feature type="binding site" evidence="1">
    <location>
        <position position="156"/>
    </location>
    <ligand>
        <name>Zn(2+)</name>
        <dbReference type="ChEBI" id="CHEBI:29105"/>
    </ligand>
</feature>
<feature type="binding site" evidence="1">
    <location>
        <position position="166"/>
    </location>
    <ligand>
        <name>Zn(2+)</name>
        <dbReference type="ChEBI" id="CHEBI:29105"/>
    </ligand>
</feature>
<feature type="binding site" evidence="1">
    <location>
        <position position="168"/>
    </location>
    <ligand>
        <name>Zn(2+)</name>
        <dbReference type="ChEBI" id="CHEBI:29105"/>
    </ligand>
</feature>
<feature type="binding site" evidence="1">
    <location>
        <position position="173"/>
    </location>
    <ligand>
        <name>Zn(2+)</name>
        <dbReference type="ChEBI" id="CHEBI:29105"/>
    </ligand>
</feature>
<comment type="function">
    <text evidence="1">Catalyzes the phosphorylation of N-acetylmannosamine (ManNAc) to ManNAc-6-P.</text>
</comment>
<comment type="catalytic activity">
    <reaction evidence="1">
        <text>an N-acyl-D-mannosamine + ATP = an N-acyl-D-mannosamine 6-phosphate + ADP + H(+)</text>
        <dbReference type="Rhea" id="RHEA:23832"/>
        <dbReference type="ChEBI" id="CHEBI:15378"/>
        <dbReference type="ChEBI" id="CHEBI:16062"/>
        <dbReference type="ChEBI" id="CHEBI:30616"/>
        <dbReference type="ChEBI" id="CHEBI:57666"/>
        <dbReference type="ChEBI" id="CHEBI:456216"/>
        <dbReference type="EC" id="2.7.1.60"/>
    </reaction>
</comment>
<comment type="pathway">
    <text evidence="1">Amino-sugar metabolism; N-acetylneuraminate degradation; D-fructose 6-phosphate from N-acetylneuraminate: step 2/5.</text>
</comment>
<comment type="subunit">
    <text evidence="1">Homodimer.</text>
</comment>
<comment type="similarity">
    <text evidence="1">Belongs to the ROK (NagC/XylR) family. NanK subfamily.</text>
</comment>
<keyword id="KW-0067">ATP-binding</keyword>
<keyword id="KW-0119">Carbohydrate metabolism</keyword>
<keyword id="KW-0418">Kinase</keyword>
<keyword id="KW-0479">Metal-binding</keyword>
<keyword id="KW-0547">Nucleotide-binding</keyword>
<keyword id="KW-0808">Transferase</keyword>
<keyword id="KW-0862">Zinc</keyword>
<organism>
    <name type="scientific">Escherichia coli O9:H4 (strain HS)</name>
    <dbReference type="NCBI Taxonomy" id="331112"/>
    <lineage>
        <taxon>Bacteria</taxon>
        <taxon>Pseudomonadati</taxon>
        <taxon>Pseudomonadota</taxon>
        <taxon>Gammaproteobacteria</taxon>
        <taxon>Enterobacterales</taxon>
        <taxon>Enterobacteriaceae</taxon>
        <taxon>Escherichia</taxon>
    </lineage>
</organism>
<reference key="1">
    <citation type="journal article" date="2008" name="J. Bacteriol.">
        <title>The pangenome structure of Escherichia coli: comparative genomic analysis of E. coli commensal and pathogenic isolates.</title>
        <authorList>
            <person name="Rasko D.A."/>
            <person name="Rosovitz M.J."/>
            <person name="Myers G.S.A."/>
            <person name="Mongodin E.F."/>
            <person name="Fricke W.F."/>
            <person name="Gajer P."/>
            <person name="Crabtree J."/>
            <person name="Sebaihia M."/>
            <person name="Thomson N.R."/>
            <person name="Chaudhuri R."/>
            <person name="Henderson I.R."/>
            <person name="Sperandio V."/>
            <person name="Ravel J."/>
        </authorList>
    </citation>
    <scope>NUCLEOTIDE SEQUENCE [LARGE SCALE GENOMIC DNA]</scope>
    <source>
        <strain>HS</strain>
    </source>
</reference>
<protein>
    <recommendedName>
        <fullName evidence="1">N-acetylmannosamine kinase</fullName>
        <ecNumber evidence="1">2.7.1.60</ecNumber>
    </recommendedName>
    <alternativeName>
        <fullName evidence="1">ManNAc kinase</fullName>
    </alternativeName>
    <alternativeName>
        <fullName evidence="1">N-acetyl-D-mannosamine kinase</fullName>
    </alternativeName>
</protein>
<dbReference type="EC" id="2.7.1.60" evidence="1"/>
<dbReference type="EMBL" id="CP000802">
    <property type="protein sequence ID" value="ABV07636.1"/>
    <property type="molecule type" value="Genomic_DNA"/>
</dbReference>
<dbReference type="RefSeq" id="WP_000209009.1">
    <property type="nucleotide sequence ID" value="NC_009800.1"/>
</dbReference>
<dbReference type="SMR" id="A8A532"/>
<dbReference type="KEGG" id="ecx:EcHS_A3410"/>
<dbReference type="HOGENOM" id="CLU_036604_0_4_6"/>
<dbReference type="UniPathway" id="UPA00629">
    <property type="reaction ID" value="UER00681"/>
</dbReference>
<dbReference type="GO" id="GO:0005524">
    <property type="term" value="F:ATP binding"/>
    <property type="evidence" value="ECO:0007669"/>
    <property type="project" value="UniProtKB-UniRule"/>
</dbReference>
<dbReference type="GO" id="GO:0009384">
    <property type="term" value="F:N-acylmannosamine kinase activity"/>
    <property type="evidence" value="ECO:0007669"/>
    <property type="project" value="UniProtKB-UniRule"/>
</dbReference>
<dbReference type="GO" id="GO:0008270">
    <property type="term" value="F:zinc ion binding"/>
    <property type="evidence" value="ECO:0007669"/>
    <property type="project" value="UniProtKB-UniRule"/>
</dbReference>
<dbReference type="GO" id="GO:0019262">
    <property type="term" value="P:N-acetylneuraminate catabolic process"/>
    <property type="evidence" value="ECO:0007669"/>
    <property type="project" value="UniProtKB-UniRule"/>
</dbReference>
<dbReference type="CDD" id="cd24069">
    <property type="entry name" value="ASKHA_NBD_ROK_EcNanK-like"/>
    <property type="match status" value="1"/>
</dbReference>
<dbReference type="FunFam" id="3.30.420.40:FF:000062">
    <property type="entry name" value="N-acetylmannosamine kinase"/>
    <property type="match status" value="1"/>
</dbReference>
<dbReference type="FunFam" id="3.30.420.40:FF:000063">
    <property type="entry name" value="N-acetylmannosamine kinase"/>
    <property type="match status" value="1"/>
</dbReference>
<dbReference type="Gene3D" id="3.30.420.40">
    <property type="match status" value="2"/>
</dbReference>
<dbReference type="HAMAP" id="MF_01234">
    <property type="entry name" value="ManNAc_kinase"/>
    <property type="match status" value="1"/>
</dbReference>
<dbReference type="InterPro" id="IPR043129">
    <property type="entry name" value="ATPase_NBD"/>
</dbReference>
<dbReference type="InterPro" id="IPR023945">
    <property type="entry name" value="ManNAc_kinase_bac"/>
</dbReference>
<dbReference type="InterPro" id="IPR000600">
    <property type="entry name" value="ROK"/>
</dbReference>
<dbReference type="InterPro" id="IPR049874">
    <property type="entry name" value="ROK_cs"/>
</dbReference>
<dbReference type="NCBIfam" id="NF047821">
    <property type="entry name" value="NactlManKinNanK"/>
    <property type="match status" value="1"/>
</dbReference>
<dbReference type="NCBIfam" id="NF003461">
    <property type="entry name" value="PRK05082.1"/>
    <property type="match status" value="1"/>
</dbReference>
<dbReference type="PANTHER" id="PTHR18964:SF169">
    <property type="entry name" value="N-ACETYLMANNOSAMINE KINASE"/>
    <property type="match status" value="1"/>
</dbReference>
<dbReference type="PANTHER" id="PTHR18964">
    <property type="entry name" value="ROK (REPRESSOR, ORF, KINASE) FAMILY"/>
    <property type="match status" value="1"/>
</dbReference>
<dbReference type="Pfam" id="PF00480">
    <property type="entry name" value="ROK"/>
    <property type="match status" value="1"/>
</dbReference>
<dbReference type="SUPFAM" id="SSF53067">
    <property type="entry name" value="Actin-like ATPase domain"/>
    <property type="match status" value="1"/>
</dbReference>
<dbReference type="PROSITE" id="PS01125">
    <property type="entry name" value="ROK"/>
    <property type="match status" value="1"/>
</dbReference>
<evidence type="ECO:0000255" key="1">
    <source>
        <dbReference type="HAMAP-Rule" id="MF_01234"/>
    </source>
</evidence>
<accession>A8A532</accession>
<sequence length="291" mass="29672">MTTLAIDIGGTKLAAALIGADGQIRDRRELPTPASQTPEALRDALSALVSPLQAHAQRVAIASTGIIRDGSLLALNPHNLGGLLHFPLVKTLEQLTNLPSIAINDAQAAAWAEYQALEGDITDMVFITVSTGVGGGVVSGGKLLTGPGGLAGHIGHTLADPHGPVCGCGRTGCVEAIASGRGIAAAAQGELAGADARTIFTRAGQGDEQAQQLIHRSARTLARLIADIKATTDCQCVVVGGSVGLAEGYLALVEMYLAQEPAAFHVDLLAAHYRHDAGLLGAALLAQGEKL</sequence>
<proteinExistence type="inferred from homology"/>